<feature type="chain" id="PRO_0000124996" description="Large ribosomal subunit protein uL5">
    <location>
        <begin position="1"/>
        <end position="180"/>
    </location>
</feature>
<accession>Q8E7S9</accession>
<protein>
    <recommendedName>
        <fullName evidence="1">Large ribosomal subunit protein uL5</fullName>
    </recommendedName>
    <alternativeName>
        <fullName evidence="2">50S ribosomal protein L5</fullName>
    </alternativeName>
</protein>
<dbReference type="EMBL" id="AL766843">
    <property type="protein sequence ID" value="CAD45715.1"/>
    <property type="molecule type" value="Genomic_DNA"/>
</dbReference>
<dbReference type="RefSeq" id="WP_000013545.1">
    <property type="nucleotide sequence ID" value="NC_004368.1"/>
</dbReference>
<dbReference type="SMR" id="Q8E7S9"/>
<dbReference type="GeneID" id="66885030"/>
<dbReference type="KEGG" id="san:rplE"/>
<dbReference type="eggNOG" id="COG0094">
    <property type="taxonomic scope" value="Bacteria"/>
</dbReference>
<dbReference type="HOGENOM" id="CLU_061015_2_1_9"/>
<dbReference type="Proteomes" id="UP000000823">
    <property type="component" value="Chromosome"/>
</dbReference>
<dbReference type="GO" id="GO:1990904">
    <property type="term" value="C:ribonucleoprotein complex"/>
    <property type="evidence" value="ECO:0007669"/>
    <property type="project" value="UniProtKB-KW"/>
</dbReference>
<dbReference type="GO" id="GO:0005840">
    <property type="term" value="C:ribosome"/>
    <property type="evidence" value="ECO:0007669"/>
    <property type="project" value="UniProtKB-KW"/>
</dbReference>
<dbReference type="GO" id="GO:0019843">
    <property type="term" value="F:rRNA binding"/>
    <property type="evidence" value="ECO:0007669"/>
    <property type="project" value="UniProtKB-UniRule"/>
</dbReference>
<dbReference type="GO" id="GO:0003735">
    <property type="term" value="F:structural constituent of ribosome"/>
    <property type="evidence" value="ECO:0007669"/>
    <property type="project" value="InterPro"/>
</dbReference>
<dbReference type="GO" id="GO:0000049">
    <property type="term" value="F:tRNA binding"/>
    <property type="evidence" value="ECO:0007669"/>
    <property type="project" value="UniProtKB-UniRule"/>
</dbReference>
<dbReference type="GO" id="GO:0006412">
    <property type="term" value="P:translation"/>
    <property type="evidence" value="ECO:0007669"/>
    <property type="project" value="UniProtKB-UniRule"/>
</dbReference>
<dbReference type="FunFam" id="3.30.1440.10:FF:000001">
    <property type="entry name" value="50S ribosomal protein L5"/>
    <property type="match status" value="1"/>
</dbReference>
<dbReference type="Gene3D" id="3.30.1440.10">
    <property type="match status" value="1"/>
</dbReference>
<dbReference type="HAMAP" id="MF_01333_B">
    <property type="entry name" value="Ribosomal_uL5_B"/>
    <property type="match status" value="1"/>
</dbReference>
<dbReference type="InterPro" id="IPR002132">
    <property type="entry name" value="Ribosomal_uL5"/>
</dbReference>
<dbReference type="InterPro" id="IPR020930">
    <property type="entry name" value="Ribosomal_uL5_bac-type"/>
</dbReference>
<dbReference type="InterPro" id="IPR031309">
    <property type="entry name" value="Ribosomal_uL5_C"/>
</dbReference>
<dbReference type="InterPro" id="IPR020929">
    <property type="entry name" value="Ribosomal_uL5_CS"/>
</dbReference>
<dbReference type="InterPro" id="IPR022803">
    <property type="entry name" value="Ribosomal_uL5_dom_sf"/>
</dbReference>
<dbReference type="InterPro" id="IPR031310">
    <property type="entry name" value="Ribosomal_uL5_N"/>
</dbReference>
<dbReference type="NCBIfam" id="NF000585">
    <property type="entry name" value="PRK00010.1"/>
    <property type="match status" value="1"/>
</dbReference>
<dbReference type="PANTHER" id="PTHR11994">
    <property type="entry name" value="60S RIBOSOMAL PROTEIN L11-RELATED"/>
    <property type="match status" value="1"/>
</dbReference>
<dbReference type="Pfam" id="PF00281">
    <property type="entry name" value="Ribosomal_L5"/>
    <property type="match status" value="1"/>
</dbReference>
<dbReference type="Pfam" id="PF00673">
    <property type="entry name" value="Ribosomal_L5_C"/>
    <property type="match status" value="1"/>
</dbReference>
<dbReference type="PIRSF" id="PIRSF002161">
    <property type="entry name" value="Ribosomal_L5"/>
    <property type="match status" value="1"/>
</dbReference>
<dbReference type="SUPFAM" id="SSF55282">
    <property type="entry name" value="RL5-like"/>
    <property type="match status" value="1"/>
</dbReference>
<dbReference type="PROSITE" id="PS00358">
    <property type="entry name" value="RIBOSOMAL_L5"/>
    <property type="match status" value="1"/>
</dbReference>
<keyword id="KW-0687">Ribonucleoprotein</keyword>
<keyword id="KW-0689">Ribosomal protein</keyword>
<keyword id="KW-0694">RNA-binding</keyword>
<keyword id="KW-0699">rRNA-binding</keyword>
<keyword id="KW-0820">tRNA-binding</keyword>
<gene>
    <name evidence="1" type="primary">rplE</name>
    <name type="ordered locus">gbs0070</name>
</gene>
<evidence type="ECO:0000255" key="1">
    <source>
        <dbReference type="HAMAP-Rule" id="MF_01333"/>
    </source>
</evidence>
<evidence type="ECO:0000305" key="2"/>
<sequence length="180" mass="19814">MANRLKEKYTNEVVPALTEKFNYSSVMAVPKVEKIVLNMGVGDAVSNAKNLEKAAAELALISGQKPLITKAKKSIAGFRLREGVAIGAKVTLRGERMYEFLDKLVSVSLPRVRDFHGVPTKSFDGRGNYTLGVKEQLIFPEINFDDVDKVRGLDIVIVTTANTDEESRELLKGLGMPFAK</sequence>
<organism>
    <name type="scientific">Streptococcus agalactiae serotype III (strain NEM316)</name>
    <dbReference type="NCBI Taxonomy" id="211110"/>
    <lineage>
        <taxon>Bacteria</taxon>
        <taxon>Bacillati</taxon>
        <taxon>Bacillota</taxon>
        <taxon>Bacilli</taxon>
        <taxon>Lactobacillales</taxon>
        <taxon>Streptococcaceae</taxon>
        <taxon>Streptococcus</taxon>
    </lineage>
</organism>
<proteinExistence type="inferred from homology"/>
<name>RL5_STRA3</name>
<reference key="1">
    <citation type="journal article" date="2002" name="Mol. Microbiol.">
        <title>Genome sequence of Streptococcus agalactiae, a pathogen causing invasive neonatal disease.</title>
        <authorList>
            <person name="Glaser P."/>
            <person name="Rusniok C."/>
            <person name="Buchrieser C."/>
            <person name="Chevalier F."/>
            <person name="Frangeul L."/>
            <person name="Msadek T."/>
            <person name="Zouine M."/>
            <person name="Couve E."/>
            <person name="Lalioui L."/>
            <person name="Poyart C."/>
            <person name="Trieu-Cuot P."/>
            <person name="Kunst F."/>
        </authorList>
    </citation>
    <scope>NUCLEOTIDE SEQUENCE [LARGE SCALE GENOMIC DNA]</scope>
    <source>
        <strain>NEM316</strain>
    </source>
</reference>
<comment type="function">
    <text evidence="1">This is one of the proteins that bind and probably mediate the attachment of the 5S RNA into the large ribosomal subunit, where it forms part of the central protuberance. In the 70S ribosome it contacts protein S13 of the 30S subunit (bridge B1b), connecting the 2 subunits; this bridge is implicated in subunit movement. Contacts the P site tRNA; the 5S rRNA and some of its associated proteins might help stabilize positioning of ribosome-bound tRNAs.</text>
</comment>
<comment type="subunit">
    <text evidence="1">Part of the 50S ribosomal subunit; part of the 5S rRNA/L5/L18/L25 subcomplex. Contacts the 5S rRNA and the P site tRNA. Forms a bridge to the 30S subunit in the 70S ribosome.</text>
</comment>
<comment type="similarity">
    <text evidence="1">Belongs to the universal ribosomal protein uL5 family.</text>
</comment>